<protein>
    <recommendedName>
        <fullName evidence="1">Glutamate-1-semialdehyde 2,1-aminomutase 2</fullName>
        <shortName evidence="1">GSA 2</shortName>
        <ecNumber evidence="1">5.4.3.8</ecNumber>
    </recommendedName>
    <alternativeName>
        <fullName evidence="1">Glutamate-1-semialdehyde aminotransferase 2</fullName>
        <shortName evidence="1">GSA-AT 2</shortName>
    </alternativeName>
</protein>
<accession>B7HE93</accession>
<name>GSA2_BACC4</name>
<dbReference type="EC" id="5.4.3.8" evidence="1"/>
<dbReference type="EMBL" id="CP001176">
    <property type="protein sequence ID" value="ACK61561.1"/>
    <property type="molecule type" value="Genomic_DNA"/>
</dbReference>
<dbReference type="SMR" id="B7HE93"/>
<dbReference type="KEGG" id="bcb:BCB4264_A4579"/>
<dbReference type="HOGENOM" id="CLU_016922_1_5_9"/>
<dbReference type="UniPathway" id="UPA00251">
    <property type="reaction ID" value="UER00317"/>
</dbReference>
<dbReference type="Proteomes" id="UP000007096">
    <property type="component" value="Chromosome"/>
</dbReference>
<dbReference type="GO" id="GO:0005737">
    <property type="term" value="C:cytoplasm"/>
    <property type="evidence" value="ECO:0007669"/>
    <property type="project" value="UniProtKB-SubCell"/>
</dbReference>
<dbReference type="GO" id="GO:0042286">
    <property type="term" value="F:glutamate-1-semialdehyde 2,1-aminomutase activity"/>
    <property type="evidence" value="ECO:0007669"/>
    <property type="project" value="UniProtKB-UniRule"/>
</dbReference>
<dbReference type="GO" id="GO:0030170">
    <property type="term" value="F:pyridoxal phosphate binding"/>
    <property type="evidence" value="ECO:0007669"/>
    <property type="project" value="InterPro"/>
</dbReference>
<dbReference type="GO" id="GO:0008483">
    <property type="term" value="F:transaminase activity"/>
    <property type="evidence" value="ECO:0007669"/>
    <property type="project" value="InterPro"/>
</dbReference>
<dbReference type="GO" id="GO:0006782">
    <property type="term" value="P:protoporphyrinogen IX biosynthetic process"/>
    <property type="evidence" value="ECO:0007669"/>
    <property type="project" value="UniProtKB-UniRule"/>
</dbReference>
<dbReference type="CDD" id="cd00610">
    <property type="entry name" value="OAT_like"/>
    <property type="match status" value="1"/>
</dbReference>
<dbReference type="FunFam" id="3.40.640.10:FF:000021">
    <property type="entry name" value="Glutamate-1-semialdehyde 2,1-aminomutase"/>
    <property type="match status" value="1"/>
</dbReference>
<dbReference type="Gene3D" id="3.90.1150.10">
    <property type="entry name" value="Aspartate Aminotransferase, domain 1"/>
    <property type="match status" value="1"/>
</dbReference>
<dbReference type="Gene3D" id="3.40.640.10">
    <property type="entry name" value="Type I PLP-dependent aspartate aminotransferase-like (Major domain)"/>
    <property type="match status" value="1"/>
</dbReference>
<dbReference type="HAMAP" id="MF_00375">
    <property type="entry name" value="HemL_aminotrans_3"/>
    <property type="match status" value="1"/>
</dbReference>
<dbReference type="InterPro" id="IPR004639">
    <property type="entry name" value="4pyrrol_synth_GluAld_NH2Trfase"/>
</dbReference>
<dbReference type="InterPro" id="IPR005814">
    <property type="entry name" value="Aminotrans_3"/>
</dbReference>
<dbReference type="InterPro" id="IPR049704">
    <property type="entry name" value="Aminotrans_3_PPA_site"/>
</dbReference>
<dbReference type="InterPro" id="IPR015424">
    <property type="entry name" value="PyrdxlP-dep_Trfase"/>
</dbReference>
<dbReference type="InterPro" id="IPR015421">
    <property type="entry name" value="PyrdxlP-dep_Trfase_major"/>
</dbReference>
<dbReference type="InterPro" id="IPR015422">
    <property type="entry name" value="PyrdxlP-dep_Trfase_small"/>
</dbReference>
<dbReference type="NCBIfam" id="TIGR00713">
    <property type="entry name" value="hemL"/>
    <property type="match status" value="1"/>
</dbReference>
<dbReference type="NCBIfam" id="NF000818">
    <property type="entry name" value="PRK00062.1"/>
    <property type="match status" value="1"/>
</dbReference>
<dbReference type="PANTHER" id="PTHR43713">
    <property type="entry name" value="GLUTAMATE-1-SEMIALDEHYDE 2,1-AMINOMUTASE"/>
    <property type="match status" value="1"/>
</dbReference>
<dbReference type="PANTHER" id="PTHR43713:SF3">
    <property type="entry name" value="GLUTAMATE-1-SEMIALDEHYDE 2,1-AMINOMUTASE 1, CHLOROPLASTIC-RELATED"/>
    <property type="match status" value="1"/>
</dbReference>
<dbReference type="Pfam" id="PF00202">
    <property type="entry name" value="Aminotran_3"/>
    <property type="match status" value="1"/>
</dbReference>
<dbReference type="SUPFAM" id="SSF53383">
    <property type="entry name" value="PLP-dependent transferases"/>
    <property type="match status" value="1"/>
</dbReference>
<dbReference type="PROSITE" id="PS00600">
    <property type="entry name" value="AA_TRANSFER_CLASS_3"/>
    <property type="match status" value="1"/>
</dbReference>
<sequence>MKKFDKSIAAFEEAQDLMPGGVNSPVRAFKSVGMNPLFMERGKGSKVYDIDGNEYIDYVLSWGPLIHGHANDRVVEALKSVAERGTSFGAPTEIENKLAKLVIERVPSIEIVRMVNSGTEATMSALRLARGYTGRNKILKFIGCYHGHGDSLLIKAGSGVATLGLPDSPGVPEGVAKNTITVAYNDLESVKYAFEQFGDDIACVIVEPVAGNMGVVPPQPGFLEGLREVTEQNGALLIFDEVMTGFRVAYNCGQGYYGVTPDLTCLGKVIGGGLPVGAYGGKAEIMRQVAPSGPIYQAGTLSGNPLAMAAGYETLVQLTPESYVEFERKAEMLEAGLRKAAEKHGIPHHINRAGSMIGIFFTDEPVINYDAAKSSNLEFFAAYYREMVEQGVFLPPSQFEGLFLSTAHSDADIEATIAAAEIAMSKLKA</sequence>
<evidence type="ECO:0000255" key="1">
    <source>
        <dbReference type="HAMAP-Rule" id="MF_00375"/>
    </source>
</evidence>
<keyword id="KW-0963">Cytoplasm</keyword>
<keyword id="KW-0413">Isomerase</keyword>
<keyword id="KW-0627">Porphyrin biosynthesis</keyword>
<keyword id="KW-0663">Pyridoxal phosphate</keyword>
<organism>
    <name type="scientific">Bacillus cereus (strain B4264)</name>
    <dbReference type="NCBI Taxonomy" id="405532"/>
    <lineage>
        <taxon>Bacteria</taxon>
        <taxon>Bacillati</taxon>
        <taxon>Bacillota</taxon>
        <taxon>Bacilli</taxon>
        <taxon>Bacillales</taxon>
        <taxon>Bacillaceae</taxon>
        <taxon>Bacillus</taxon>
        <taxon>Bacillus cereus group</taxon>
    </lineage>
</organism>
<reference key="1">
    <citation type="submission" date="2008-10" db="EMBL/GenBank/DDBJ databases">
        <title>Genome sequence of Bacillus cereus B4264.</title>
        <authorList>
            <person name="Dodson R.J."/>
            <person name="Durkin A.S."/>
            <person name="Rosovitz M.J."/>
            <person name="Rasko D.A."/>
            <person name="Hoffmaster A."/>
            <person name="Ravel J."/>
            <person name="Sutton G."/>
        </authorList>
    </citation>
    <scope>NUCLEOTIDE SEQUENCE [LARGE SCALE GENOMIC DNA]</scope>
    <source>
        <strain>B4264</strain>
    </source>
</reference>
<proteinExistence type="inferred from homology"/>
<comment type="catalytic activity">
    <reaction evidence="1">
        <text>(S)-4-amino-5-oxopentanoate = 5-aminolevulinate</text>
        <dbReference type="Rhea" id="RHEA:14265"/>
        <dbReference type="ChEBI" id="CHEBI:57501"/>
        <dbReference type="ChEBI" id="CHEBI:356416"/>
        <dbReference type="EC" id="5.4.3.8"/>
    </reaction>
</comment>
<comment type="cofactor">
    <cofactor evidence="1">
        <name>pyridoxal 5'-phosphate</name>
        <dbReference type="ChEBI" id="CHEBI:597326"/>
    </cofactor>
</comment>
<comment type="pathway">
    <text evidence="1">Porphyrin-containing compound metabolism; protoporphyrin-IX biosynthesis; 5-aminolevulinate from L-glutamyl-tRNA(Glu): step 2/2.</text>
</comment>
<comment type="subunit">
    <text evidence="1">Homodimer.</text>
</comment>
<comment type="subcellular location">
    <subcellularLocation>
        <location evidence="1">Cytoplasm</location>
    </subcellularLocation>
</comment>
<comment type="similarity">
    <text evidence="1">Belongs to the class-III pyridoxal-phosphate-dependent aminotransferase family. HemL subfamily.</text>
</comment>
<feature type="chain" id="PRO_0000382270" description="Glutamate-1-semialdehyde 2,1-aminomutase 2">
    <location>
        <begin position="1"/>
        <end position="429"/>
    </location>
</feature>
<feature type="modified residue" description="N6-(pyridoxal phosphate)lysine" evidence="1">
    <location>
        <position position="268"/>
    </location>
</feature>
<gene>
    <name evidence="1" type="primary">hemL2</name>
    <name type="ordered locus">BCB4264_A4579</name>
</gene>